<reference key="1">
    <citation type="submission" date="2008-08" db="EMBL/GenBank/DDBJ databases">
        <title>Complete sequence of Acidithiobacillus ferrooxidans ATCC 53993.</title>
        <authorList>
            <person name="Lucas S."/>
            <person name="Copeland A."/>
            <person name="Lapidus A."/>
            <person name="Glavina del Rio T."/>
            <person name="Dalin E."/>
            <person name="Tice H."/>
            <person name="Bruce D."/>
            <person name="Goodwin L."/>
            <person name="Pitluck S."/>
            <person name="Sims D."/>
            <person name="Brettin T."/>
            <person name="Detter J.C."/>
            <person name="Han C."/>
            <person name="Kuske C.R."/>
            <person name="Larimer F."/>
            <person name="Land M."/>
            <person name="Hauser L."/>
            <person name="Kyrpides N."/>
            <person name="Lykidis A."/>
            <person name="Borole A.P."/>
        </authorList>
    </citation>
    <scope>NUCLEOTIDE SEQUENCE [LARGE SCALE GENOMIC DNA]</scope>
    <source>
        <strain>ATCC 53993 / BNL-5-31</strain>
    </source>
</reference>
<dbReference type="EC" id="4.1.99.17" evidence="1"/>
<dbReference type="EMBL" id="CP001132">
    <property type="protein sequence ID" value="ACH83306.1"/>
    <property type="molecule type" value="Genomic_DNA"/>
</dbReference>
<dbReference type="SMR" id="B5EQ61"/>
<dbReference type="KEGG" id="afe:Lferr_1064"/>
<dbReference type="eggNOG" id="COG0422">
    <property type="taxonomic scope" value="Bacteria"/>
</dbReference>
<dbReference type="HOGENOM" id="CLU_013181_2_1_6"/>
<dbReference type="UniPathway" id="UPA00060"/>
<dbReference type="GO" id="GO:0005829">
    <property type="term" value="C:cytosol"/>
    <property type="evidence" value="ECO:0007669"/>
    <property type="project" value="TreeGrafter"/>
</dbReference>
<dbReference type="GO" id="GO:0051539">
    <property type="term" value="F:4 iron, 4 sulfur cluster binding"/>
    <property type="evidence" value="ECO:0007669"/>
    <property type="project" value="UniProtKB-KW"/>
</dbReference>
<dbReference type="GO" id="GO:0016830">
    <property type="term" value="F:carbon-carbon lyase activity"/>
    <property type="evidence" value="ECO:0007669"/>
    <property type="project" value="InterPro"/>
</dbReference>
<dbReference type="GO" id="GO:0008270">
    <property type="term" value="F:zinc ion binding"/>
    <property type="evidence" value="ECO:0007669"/>
    <property type="project" value="UniProtKB-UniRule"/>
</dbReference>
<dbReference type="GO" id="GO:0009228">
    <property type="term" value="P:thiamine biosynthetic process"/>
    <property type="evidence" value="ECO:0007669"/>
    <property type="project" value="UniProtKB-KW"/>
</dbReference>
<dbReference type="GO" id="GO:0009229">
    <property type="term" value="P:thiamine diphosphate biosynthetic process"/>
    <property type="evidence" value="ECO:0007669"/>
    <property type="project" value="UniProtKB-UniRule"/>
</dbReference>
<dbReference type="FunFam" id="3.20.20.540:FF:000001">
    <property type="entry name" value="Phosphomethylpyrimidine synthase"/>
    <property type="match status" value="1"/>
</dbReference>
<dbReference type="Gene3D" id="6.10.250.620">
    <property type="match status" value="1"/>
</dbReference>
<dbReference type="Gene3D" id="3.20.20.540">
    <property type="entry name" value="Radical SAM ThiC family, central domain"/>
    <property type="match status" value="1"/>
</dbReference>
<dbReference type="HAMAP" id="MF_00089">
    <property type="entry name" value="ThiC"/>
    <property type="match status" value="1"/>
</dbReference>
<dbReference type="InterPro" id="IPR037509">
    <property type="entry name" value="ThiC"/>
</dbReference>
<dbReference type="InterPro" id="IPR025747">
    <property type="entry name" value="ThiC-associated_dom"/>
</dbReference>
<dbReference type="InterPro" id="IPR038521">
    <property type="entry name" value="ThiC/Bza_core_dom"/>
</dbReference>
<dbReference type="InterPro" id="IPR002817">
    <property type="entry name" value="ThiC/BzaA/B"/>
</dbReference>
<dbReference type="NCBIfam" id="NF006763">
    <property type="entry name" value="PRK09284.1"/>
    <property type="match status" value="1"/>
</dbReference>
<dbReference type="NCBIfam" id="NF009895">
    <property type="entry name" value="PRK13352.1"/>
    <property type="match status" value="1"/>
</dbReference>
<dbReference type="NCBIfam" id="TIGR00190">
    <property type="entry name" value="thiC"/>
    <property type="match status" value="1"/>
</dbReference>
<dbReference type="PANTHER" id="PTHR30557:SF1">
    <property type="entry name" value="PHOSPHOMETHYLPYRIMIDINE SYNTHASE, CHLOROPLASTIC"/>
    <property type="match status" value="1"/>
</dbReference>
<dbReference type="PANTHER" id="PTHR30557">
    <property type="entry name" value="THIAMINE BIOSYNTHESIS PROTEIN THIC"/>
    <property type="match status" value="1"/>
</dbReference>
<dbReference type="Pfam" id="PF13667">
    <property type="entry name" value="ThiC-associated"/>
    <property type="match status" value="1"/>
</dbReference>
<dbReference type="Pfam" id="PF01964">
    <property type="entry name" value="ThiC_Rad_SAM"/>
    <property type="match status" value="1"/>
</dbReference>
<dbReference type="SFLD" id="SFLDF00407">
    <property type="entry name" value="phosphomethylpyrimidine_syntha"/>
    <property type="match status" value="1"/>
</dbReference>
<dbReference type="SFLD" id="SFLDG01114">
    <property type="entry name" value="phosphomethylpyrimidine_syntha"/>
    <property type="match status" value="1"/>
</dbReference>
<dbReference type="SFLD" id="SFLDS00113">
    <property type="entry name" value="Radical_SAM_Phosphomethylpyrim"/>
    <property type="match status" value="1"/>
</dbReference>
<protein>
    <recommendedName>
        <fullName evidence="1">Phosphomethylpyrimidine synthase</fullName>
        <ecNumber evidence="1">4.1.99.17</ecNumber>
    </recommendedName>
    <alternativeName>
        <fullName evidence="1">Hydroxymethylpyrimidine phosphate synthase</fullName>
        <shortName evidence="1">HMP-P synthase</shortName>
        <shortName evidence="1">HMP-phosphate synthase</shortName>
        <shortName evidence="1">HMPP synthase</shortName>
    </alternativeName>
    <alternativeName>
        <fullName evidence="1">Thiamine biosynthesis protein ThiC</fullName>
    </alternativeName>
</protein>
<sequence>MATRPTDMVNTMQDAAVTCGPIPGSHKRYLGGVRFPELRIPLREIRQSDSRKRDGSLEVNPAIPVYDCSGPYTDPDVVIDIHAGLPAMRWQWSPTDTAIESRPEPGSAYGRARLADVRTADLRFHHRREIRRAANGGNVSQMHYARRGIITPEMEFVAIRENQGLEHLRASHPALFRAHRGESFGAQIPDTITPEFVRDEIARGRAIIPANINHPELEPMIIGRNFLVKINANIGNSAVTSSIAEEVEKMVWSIRWGADTVMDLSTGRHIHETREWIIRNSPVPIGTVPIYQALEKVDGKAEDLTWDLFRDTLIEQAEQGVDYFTIHAGVLLRYIPLTANRLTGIVSRGGSIMAKWCLAHHQESFLYTHFEEICEIMKAYDVSFSLGDGLRPGSLADANDEAQFAELHTLGELTRIAWKHDVQVMIEGPGHVPMQLIKANMEEELQHCFEAPFYTLGPLTTDIAPGYDHITSAIGAAQIGWYGTAMLCYVTPKEHLGLPDKNDVREGAITYKIAAHAADLAKGHPGAQVRDNALSKARFEFRWEDQFHLGLDPEKAREYHDETLPQEGAKAAHFCSMCGPHFCSMKISQDLQEYAQSKGEDIETARLEGLQEKAEDFKRLGKNIYLR</sequence>
<accession>B5EQ61</accession>
<keyword id="KW-0004">4Fe-4S</keyword>
<keyword id="KW-0408">Iron</keyword>
<keyword id="KW-0411">Iron-sulfur</keyword>
<keyword id="KW-0456">Lyase</keyword>
<keyword id="KW-0479">Metal-binding</keyword>
<keyword id="KW-0949">S-adenosyl-L-methionine</keyword>
<keyword id="KW-0784">Thiamine biosynthesis</keyword>
<keyword id="KW-0862">Zinc</keyword>
<feature type="chain" id="PRO_1000093186" description="Phosphomethylpyrimidine synthase">
    <location>
        <begin position="1"/>
        <end position="627"/>
    </location>
</feature>
<feature type="binding site" evidence="1">
    <location>
        <position position="233"/>
    </location>
    <ligand>
        <name>substrate</name>
    </ligand>
</feature>
<feature type="binding site" evidence="1">
    <location>
        <position position="262"/>
    </location>
    <ligand>
        <name>substrate</name>
    </ligand>
</feature>
<feature type="binding site" evidence="1">
    <location>
        <position position="291"/>
    </location>
    <ligand>
        <name>substrate</name>
    </ligand>
</feature>
<feature type="binding site" evidence="1">
    <location>
        <position position="327"/>
    </location>
    <ligand>
        <name>substrate</name>
    </ligand>
</feature>
<feature type="binding site" evidence="1">
    <location>
        <begin position="347"/>
        <end position="349"/>
    </location>
    <ligand>
        <name>substrate</name>
    </ligand>
</feature>
<feature type="binding site" evidence="1">
    <location>
        <begin position="388"/>
        <end position="391"/>
    </location>
    <ligand>
        <name>substrate</name>
    </ligand>
</feature>
<feature type="binding site" evidence="1">
    <location>
        <position position="427"/>
    </location>
    <ligand>
        <name>substrate</name>
    </ligand>
</feature>
<feature type="binding site" evidence="1">
    <location>
        <position position="431"/>
    </location>
    <ligand>
        <name>Zn(2+)</name>
        <dbReference type="ChEBI" id="CHEBI:29105"/>
    </ligand>
</feature>
<feature type="binding site" evidence="1">
    <location>
        <position position="454"/>
    </location>
    <ligand>
        <name>substrate</name>
    </ligand>
</feature>
<feature type="binding site" evidence="1">
    <location>
        <position position="495"/>
    </location>
    <ligand>
        <name>Zn(2+)</name>
        <dbReference type="ChEBI" id="CHEBI:29105"/>
    </ligand>
</feature>
<feature type="binding site" evidence="1">
    <location>
        <position position="575"/>
    </location>
    <ligand>
        <name>[4Fe-4S] cluster</name>
        <dbReference type="ChEBI" id="CHEBI:49883"/>
        <note>4Fe-4S-S-AdoMet</note>
    </ligand>
</feature>
<feature type="binding site" evidence="1">
    <location>
        <position position="578"/>
    </location>
    <ligand>
        <name>[4Fe-4S] cluster</name>
        <dbReference type="ChEBI" id="CHEBI:49883"/>
        <note>4Fe-4S-S-AdoMet</note>
    </ligand>
</feature>
<feature type="binding site" evidence="1">
    <location>
        <position position="583"/>
    </location>
    <ligand>
        <name>[4Fe-4S] cluster</name>
        <dbReference type="ChEBI" id="CHEBI:49883"/>
        <note>4Fe-4S-S-AdoMet</note>
    </ligand>
</feature>
<organism>
    <name type="scientific">Acidithiobacillus ferrooxidans (strain ATCC 53993 / BNL-5-31)</name>
    <name type="common">Leptospirillum ferrooxidans (ATCC 53993)</name>
    <dbReference type="NCBI Taxonomy" id="380394"/>
    <lineage>
        <taxon>Bacteria</taxon>
        <taxon>Pseudomonadati</taxon>
        <taxon>Pseudomonadota</taxon>
        <taxon>Acidithiobacillia</taxon>
        <taxon>Acidithiobacillales</taxon>
        <taxon>Acidithiobacillaceae</taxon>
        <taxon>Acidithiobacillus</taxon>
    </lineage>
</organism>
<comment type="function">
    <text evidence="1">Catalyzes the synthesis of the hydroxymethylpyrimidine phosphate (HMP-P) moiety of thiamine from aminoimidazole ribotide (AIR) in a radical S-adenosyl-L-methionine (SAM)-dependent reaction.</text>
</comment>
<comment type="catalytic activity">
    <reaction evidence="1">
        <text>5-amino-1-(5-phospho-beta-D-ribosyl)imidazole + S-adenosyl-L-methionine = 4-amino-2-methyl-5-(phosphooxymethyl)pyrimidine + CO + 5'-deoxyadenosine + formate + L-methionine + 3 H(+)</text>
        <dbReference type="Rhea" id="RHEA:24840"/>
        <dbReference type="ChEBI" id="CHEBI:15378"/>
        <dbReference type="ChEBI" id="CHEBI:15740"/>
        <dbReference type="ChEBI" id="CHEBI:17245"/>
        <dbReference type="ChEBI" id="CHEBI:17319"/>
        <dbReference type="ChEBI" id="CHEBI:57844"/>
        <dbReference type="ChEBI" id="CHEBI:58354"/>
        <dbReference type="ChEBI" id="CHEBI:59789"/>
        <dbReference type="ChEBI" id="CHEBI:137981"/>
        <dbReference type="EC" id="4.1.99.17"/>
    </reaction>
</comment>
<comment type="cofactor">
    <cofactor evidence="1">
        <name>[4Fe-4S] cluster</name>
        <dbReference type="ChEBI" id="CHEBI:49883"/>
    </cofactor>
    <text evidence="1">Binds 1 [4Fe-4S] cluster per subunit. The cluster is coordinated with 3 cysteines and an exchangeable S-adenosyl-L-methionine.</text>
</comment>
<comment type="pathway">
    <text evidence="1">Cofactor biosynthesis; thiamine diphosphate biosynthesis.</text>
</comment>
<comment type="subunit">
    <text evidence="1">Homodimer.</text>
</comment>
<comment type="similarity">
    <text evidence="1">Belongs to the ThiC family.</text>
</comment>
<name>THIC_ACIF5</name>
<evidence type="ECO:0000255" key="1">
    <source>
        <dbReference type="HAMAP-Rule" id="MF_00089"/>
    </source>
</evidence>
<gene>
    <name evidence="1" type="primary">thiC</name>
    <name type="ordered locus">Lferr_1064</name>
</gene>
<proteinExistence type="inferred from homology"/>